<evidence type="ECO:0000255" key="1">
    <source>
        <dbReference type="HAMAP-Rule" id="MF_00205"/>
    </source>
</evidence>
<evidence type="ECO:0000256" key="2">
    <source>
        <dbReference type="SAM" id="MobiDB-lite"/>
    </source>
</evidence>
<dbReference type="EMBL" id="AE008923">
    <property type="protein sequence ID" value="AAM36119.1"/>
    <property type="molecule type" value="Genomic_DNA"/>
</dbReference>
<dbReference type="RefSeq" id="WP_011050799.1">
    <property type="nucleotide sequence ID" value="NC_003919.1"/>
</dbReference>
<dbReference type="SMR" id="Q8PN26"/>
<dbReference type="GeneID" id="66910417"/>
<dbReference type="KEGG" id="xac:XAC1247"/>
<dbReference type="eggNOG" id="COG0178">
    <property type="taxonomic scope" value="Bacteria"/>
</dbReference>
<dbReference type="HOGENOM" id="CLU_001370_0_2_6"/>
<dbReference type="Proteomes" id="UP000000576">
    <property type="component" value="Chromosome"/>
</dbReference>
<dbReference type="GO" id="GO:0005737">
    <property type="term" value="C:cytoplasm"/>
    <property type="evidence" value="ECO:0007669"/>
    <property type="project" value="UniProtKB-SubCell"/>
</dbReference>
<dbReference type="GO" id="GO:0009380">
    <property type="term" value="C:excinuclease repair complex"/>
    <property type="evidence" value="ECO:0007669"/>
    <property type="project" value="InterPro"/>
</dbReference>
<dbReference type="GO" id="GO:0005524">
    <property type="term" value="F:ATP binding"/>
    <property type="evidence" value="ECO:0007669"/>
    <property type="project" value="UniProtKB-UniRule"/>
</dbReference>
<dbReference type="GO" id="GO:0016887">
    <property type="term" value="F:ATP hydrolysis activity"/>
    <property type="evidence" value="ECO:0007669"/>
    <property type="project" value="InterPro"/>
</dbReference>
<dbReference type="GO" id="GO:0003677">
    <property type="term" value="F:DNA binding"/>
    <property type="evidence" value="ECO:0007669"/>
    <property type="project" value="UniProtKB-UniRule"/>
</dbReference>
<dbReference type="GO" id="GO:0009381">
    <property type="term" value="F:excinuclease ABC activity"/>
    <property type="evidence" value="ECO:0007669"/>
    <property type="project" value="UniProtKB-UniRule"/>
</dbReference>
<dbReference type="GO" id="GO:0008270">
    <property type="term" value="F:zinc ion binding"/>
    <property type="evidence" value="ECO:0007669"/>
    <property type="project" value="UniProtKB-UniRule"/>
</dbReference>
<dbReference type="GO" id="GO:0006289">
    <property type="term" value="P:nucleotide-excision repair"/>
    <property type="evidence" value="ECO:0007669"/>
    <property type="project" value="UniProtKB-UniRule"/>
</dbReference>
<dbReference type="GO" id="GO:0009432">
    <property type="term" value="P:SOS response"/>
    <property type="evidence" value="ECO:0007669"/>
    <property type="project" value="UniProtKB-UniRule"/>
</dbReference>
<dbReference type="CDD" id="cd03270">
    <property type="entry name" value="ABC_UvrA_I"/>
    <property type="match status" value="1"/>
</dbReference>
<dbReference type="CDD" id="cd03271">
    <property type="entry name" value="ABC_UvrA_II"/>
    <property type="match status" value="1"/>
</dbReference>
<dbReference type="FunFam" id="1.10.8.280:FF:000001">
    <property type="entry name" value="UvrABC system protein A"/>
    <property type="match status" value="1"/>
</dbReference>
<dbReference type="FunFam" id="1.20.1580.10:FF:000002">
    <property type="entry name" value="UvrABC system protein A"/>
    <property type="match status" value="1"/>
</dbReference>
<dbReference type="Gene3D" id="1.10.8.280">
    <property type="entry name" value="ABC transporter ATPase domain-like"/>
    <property type="match status" value="1"/>
</dbReference>
<dbReference type="Gene3D" id="1.20.1580.10">
    <property type="entry name" value="ABC transporter ATPase like domain"/>
    <property type="match status" value="2"/>
</dbReference>
<dbReference type="Gene3D" id="3.30.1490.20">
    <property type="entry name" value="ATP-grasp fold, A domain"/>
    <property type="match status" value="1"/>
</dbReference>
<dbReference type="Gene3D" id="3.40.50.300">
    <property type="entry name" value="P-loop containing nucleotide triphosphate hydrolases"/>
    <property type="match status" value="2"/>
</dbReference>
<dbReference type="HAMAP" id="MF_00205">
    <property type="entry name" value="UvrA"/>
    <property type="match status" value="1"/>
</dbReference>
<dbReference type="InterPro" id="IPR003439">
    <property type="entry name" value="ABC_transporter-like_ATP-bd"/>
</dbReference>
<dbReference type="InterPro" id="IPR017871">
    <property type="entry name" value="ABC_transporter-like_CS"/>
</dbReference>
<dbReference type="InterPro" id="IPR013815">
    <property type="entry name" value="ATP_grasp_subdomain_1"/>
</dbReference>
<dbReference type="InterPro" id="IPR027417">
    <property type="entry name" value="P-loop_NTPase"/>
</dbReference>
<dbReference type="InterPro" id="IPR004602">
    <property type="entry name" value="UvrA"/>
</dbReference>
<dbReference type="InterPro" id="IPR041552">
    <property type="entry name" value="UvrA_DNA-bd"/>
</dbReference>
<dbReference type="InterPro" id="IPR041102">
    <property type="entry name" value="UvrA_inter"/>
</dbReference>
<dbReference type="NCBIfam" id="NF001503">
    <property type="entry name" value="PRK00349.1"/>
    <property type="match status" value="1"/>
</dbReference>
<dbReference type="NCBIfam" id="TIGR00630">
    <property type="entry name" value="uvra"/>
    <property type="match status" value="1"/>
</dbReference>
<dbReference type="PANTHER" id="PTHR43152">
    <property type="entry name" value="UVRABC SYSTEM PROTEIN A"/>
    <property type="match status" value="1"/>
</dbReference>
<dbReference type="PANTHER" id="PTHR43152:SF3">
    <property type="entry name" value="UVRABC SYSTEM PROTEIN A"/>
    <property type="match status" value="1"/>
</dbReference>
<dbReference type="Pfam" id="PF17755">
    <property type="entry name" value="UvrA_DNA-bind"/>
    <property type="match status" value="1"/>
</dbReference>
<dbReference type="Pfam" id="PF17760">
    <property type="entry name" value="UvrA_inter"/>
    <property type="match status" value="1"/>
</dbReference>
<dbReference type="SUPFAM" id="SSF52540">
    <property type="entry name" value="P-loop containing nucleoside triphosphate hydrolases"/>
    <property type="match status" value="2"/>
</dbReference>
<dbReference type="PROSITE" id="PS00211">
    <property type="entry name" value="ABC_TRANSPORTER_1"/>
    <property type="match status" value="2"/>
</dbReference>
<dbReference type="PROSITE" id="PS50893">
    <property type="entry name" value="ABC_TRANSPORTER_2"/>
    <property type="match status" value="1"/>
</dbReference>
<accession>Q8PN26</accession>
<keyword id="KW-0067">ATP-binding</keyword>
<keyword id="KW-0963">Cytoplasm</keyword>
<keyword id="KW-0227">DNA damage</keyword>
<keyword id="KW-0228">DNA excision</keyword>
<keyword id="KW-0234">DNA repair</keyword>
<keyword id="KW-0238">DNA-binding</keyword>
<keyword id="KW-0267">Excision nuclease</keyword>
<keyword id="KW-0479">Metal-binding</keyword>
<keyword id="KW-0547">Nucleotide-binding</keyword>
<keyword id="KW-0677">Repeat</keyword>
<keyword id="KW-0742">SOS response</keyword>
<keyword id="KW-0862">Zinc</keyword>
<keyword id="KW-0863">Zinc-finger</keyword>
<name>UVRA_XANAC</name>
<gene>
    <name evidence="1" type="primary">uvrA</name>
    <name type="synonym">uvrA1</name>
    <name type="ordered locus">XAC1247</name>
</gene>
<feature type="chain" id="PRO_0000093116" description="UvrABC system protein A">
    <location>
        <begin position="1"/>
        <end position="987"/>
    </location>
</feature>
<feature type="domain" description="ABC transporter 1" evidence="1">
    <location>
        <begin position="312"/>
        <end position="589"/>
    </location>
</feature>
<feature type="domain" description="ABC transporter 2" evidence="1">
    <location>
        <begin position="609"/>
        <end position="938"/>
    </location>
</feature>
<feature type="zinc finger region" description="C4-type" evidence="1">
    <location>
        <begin position="255"/>
        <end position="282"/>
    </location>
</feature>
<feature type="zinc finger region" description="C4-type" evidence="1">
    <location>
        <begin position="741"/>
        <end position="767"/>
    </location>
</feature>
<feature type="region of interest" description="Disordered" evidence="2">
    <location>
        <begin position="948"/>
        <end position="987"/>
    </location>
</feature>
<feature type="compositionally biased region" description="Basic and acidic residues" evidence="2">
    <location>
        <begin position="958"/>
        <end position="972"/>
    </location>
</feature>
<feature type="compositionally biased region" description="Basic residues" evidence="2">
    <location>
        <begin position="978"/>
        <end position="987"/>
    </location>
</feature>
<feature type="binding site" evidence="1">
    <location>
        <begin position="33"/>
        <end position="40"/>
    </location>
    <ligand>
        <name>ATP</name>
        <dbReference type="ChEBI" id="CHEBI:30616"/>
    </ligand>
</feature>
<feature type="binding site" evidence="1">
    <location>
        <begin position="642"/>
        <end position="649"/>
    </location>
    <ligand>
        <name>ATP</name>
        <dbReference type="ChEBI" id="CHEBI:30616"/>
    </ligand>
</feature>
<organism>
    <name type="scientific">Xanthomonas axonopodis pv. citri (strain 306)</name>
    <dbReference type="NCBI Taxonomy" id="190486"/>
    <lineage>
        <taxon>Bacteria</taxon>
        <taxon>Pseudomonadati</taxon>
        <taxon>Pseudomonadota</taxon>
        <taxon>Gammaproteobacteria</taxon>
        <taxon>Lysobacterales</taxon>
        <taxon>Lysobacteraceae</taxon>
        <taxon>Xanthomonas</taxon>
    </lineage>
</organism>
<proteinExistence type="inferred from homology"/>
<reference key="1">
    <citation type="journal article" date="2002" name="Nature">
        <title>Comparison of the genomes of two Xanthomonas pathogens with differing host specificities.</title>
        <authorList>
            <person name="da Silva A.C.R."/>
            <person name="Ferro J.A."/>
            <person name="Reinach F.C."/>
            <person name="Farah C.S."/>
            <person name="Furlan L.R."/>
            <person name="Quaggio R.B."/>
            <person name="Monteiro-Vitorello C.B."/>
            <person name="Van Sluys M.A."/>
            <person name="Almeida N.F. Jr."/>
            <person name="Alves L.M.C."/>
            <person name="do Amaral A.M."/>
            <person name="Bertolini M.C."/>
            <person name="Camargo L.E.A."/>
            <person name="Camarotte G."/>
            <person name="Cannavan F."/>
            <person name="Cardozo J."/>
            <person name="Chambergo F."/>
            <person name="Ciapina L.P."/>
            <person name="Cicarelli R.M.B."/>
            <person name="Coutinho L.L."/>
            <person name="Cursino-Santos J.R."/>
            <person name="El-Dorry H."/>
            <person name="Faria J.B."/>
            <person name="Ferreira A.J.S."/>
            <person name="Ferreira R.C.C."/>
            <person name="Ferro M.I.T."/>
            <person name="Formighieri E.F."/>
            <person name="Franco M.C."/>
            <person name="Greggio C.C."/>
            <person name="Gruber A."/>
            <person name="Katsuyama A.M."/>
            <person name="Kishi L.T."/>
            <person name="Leite R.P."/>
            <person name="Lemos E.G.M."/>
            <person name="Lemos M.V.F."/>
            <person name="Locali E.C."/>
            <person name="Machado M.A."/>
            <person name="Madeira A.M.B.N."/>
            <person name="Martinez-Rossi N.M."/>
            <person name="Martins E.C."/>
            <person name="Meidanis J."/>
            <person name="Menck C.F.M."/>
            <person name="Miyaki C.Y."/>
            <person name="Moon D.H."/>
            <person name="Moreira L.M."/>
            <person name="Novo M.T.M."/>
            <person name="Okura V.K."/>
            <person name="Oliveira M.C."/>
            <person name="Oliveira V.R."/>
            <person name="Pereira H.A."/>
            <person name="Rossi A."/>
            <person name="Sena J.A.D."/>
            <person name="Silva C."/>
            <person name="de Souza R.F."/>
            <person name="Spinola L.A.F."/>
            <person name="Takita M.A."/>
            <person name="Tamura R.E."/>
            <person name="Teixeira E.C."/>
            <person name="Tezza R.I.D."/>
            <person name="Trindade dos Santos M."/>
            <person name="Truffi D."/>
            <person name="Tsai S.M."/>
            <person name="White F.F."/>
            <person name="Setubal J.C."/>
            <person name="Kitajima J.P."/>
        </authorList>
    </citation>
    <scope>NUCLEOTIDE SEQUENCE [LARGE SCALE GENOMIC DNA]</scope>
    <source>
        <strain>306</strain>
    </source>
</reference>
<comment type="function">
    <text evidence="1">The UvrABC repair system catalyzes the recognition and processing of DNA lesions. UvrA is an ATPase and a DNA-binding protein. A damage recognition complex composed of 2 UvrA and 2 UvrB subunits scans DNA for abnormalities. When the presence of a lesion has been verified by UvrB, the UvrA molecules dissociate.</text>
</comment>
<comment type="subunit">
    <text evidence="1">Forms a heterotetramer with UvrB during the search for lesions.</text>
</comment>
<comment type="subcellular location">
    <subcellularLocation>
        <location evidence="1">Cytoplasm</location>
    </subcellularLocation>
</comment>
<comment type="similarity">
    <text evidence="1">Belongs to the ABC transporter superfamily. UvrA family.</text>
</comment>
<protein>
    <recommendedName>
        <fullName evidence="1">UvrABC system protein A</fullName>
        <shortName evidence="1">UvrA protein</shortName>
    </recommendedName>
    <alternativeName>
        <fullName evidence="1">Excinuclease ABC subunit A</fullName>
    </alternativeName>
</protein>
<sequence length="987" mass="109143">MAMDFIRIRGARTHNLKNIDLDLPRDKLIVITGLSGSGKSSLAFDTIYAEGQRRYVESLSAYARQFLSVMEKPDLDHIEGLSPAISIEQKSTSHNPRSTVGTITEIYDYLRLLYARVGQPRCPDHGFPLEAQTVSQMVDHMLAQDQEQRYMLLAPVIRDRKGEHAQVFEQLRAQGFVRVRVDGELYEIDAVPPLALRQKHTIEAVIDRFRPREDIKQRLAESFETALKLGEGMVAVQSLDDPAAAPHLFSSKYSCPVCDYSLPELEPRLFSFNAPVGACPSCDGLGVAEFFDPDRVVVHPELSLSAGAVRGWDRRNAYYFQLIASLAKHYKFDVDAVWNTLPAKVRQAVLFGSGDEVISFTYFTDAGGRTTRKHRFEGILPNLERRYRETESPAVREELTKYVSQQPCPACNGTRLNRAARNVFVADRPLPELVVLPVNEALSFFRGLSLPGWRGEIAAKIVKEIGERLGFLVDVGLDYLTLERKADTLSGGEAQRIRLASQIGAGLVGVMYVLDEPSIGLHQRDNERLLGTLTRLRDLGNTVIVVEHDEDAIRLADHVLDIGPGAGVHGGEICAQGTLDDILKSPRSLTGQYLSGKRRIEIPKQRHKPNPKMMLHLRGATGNNLKNVDLDIPAGLLTCITGVSGSGKSTLINDTLFTLAANEINGASHTVAPHREVENLDLFDKVVDIDQSPIGRTPRSNPATYTGMFTPLRELFAQVPEARARGYSPGRFSFNVRGGRCEACQGDGMIKVEMHFLPDVYVPCDVCHGKRYNRETLEIRYKGFNISDVLQMTVEDALRLFEPVPSIARKLETLVDVGLSYIKLGQSATTLSGGEAQRVKLSKELSRRDTGRTLYILDEPTTGLHFHDIEALLGVLHKLRDEGNTVVVIEHNLDVIKTADWIVDLGPEGGHRGGTILVSGTPEEVAAHKASYTGQFLAKMLPSVKARETRPAAMANKPDARPPRKVKPEKVAKAAKSATKKTAKKAS</sequence>